<evidence type="ECO:0000250" key="1"/>
<evidence type="ECO:0000255" key="2"/>
<evidence type="ECO:0000255" key="3">
    <source>
        <dbReference type="PROSITE-ProRule" id="PRU00039"/>
    </source>
</evidence>
<evidence type="ECO:0000255" key="4">
    <source>
        <dbReference type="PROSITE-ProRule" id="PRU00076"/>
    </source>
</evidence>
<evidence type="ECO:0000255" key="5">
    <source>
        <dbReference type="PROSITE-ProRule" id="PRU00122"/>
    </source>
</evidence>
<evidence type="ECO:0000269" key="6">
    <source>
    </source>
</evidence>
<evidence type="ECO:0000303" key="7">
    <source>
    </source>
</evidence>
<evidence type="ECO:0000305" key="8"/>
<dbReference type="EMBL" id="AB017167">
    <property type="protein sequence ID" value="BAA35184.1"/>
    <property type="molecule type" value="mRNA"/>
</dbReference>
<dbReference type="EMBL" id="AB011537">
    <property type="protein sequence ID" value="BAA32465.3"/>
    <property type="status" value="ALT_INIT"/>
    <property type="molecule type" value="mRNA"/>
</dbReference>
<dbReference type="EMBL" id="AL442123">
    <property type="status" value="NOT_ANNOTATED_CDS"/>
    <property type="molecule type" value="Genomic_DNA"/>
</dbReference>
<dbReference type="EMBL" id="AL512424">
    <property type="status" value="NOT_ANNOTATED_CDS"/>
    <property type="molecule type" value="Genomic_DNA"/>
</dbReference>
<dbReference type="EMBL" id="CH471066">
    <property type="protein sequence ID" value="EAW49958.1"/>
    <property type="molecule type" value="Genomic_DNA"/>
</dbReference>
<dbReference type="EMBL" id="BC146851">
    <property type="protein sequence ID" value="AAI46852.1"/>
    <property type="molecule type" value="mRNA"/>
</dbReference>
<dbReference type="EMBL" id="AY029183">
    <property type="protein sequence ID" value="AAK31796.1"/>
    <property type="molecule type" value="mRNA"/>
</dbReference>
<dbReference type="CCDS" id="CCDS7453.1">
    <molecule id="O75093-1"/>
</dbReference>
<dbReference type="RefSeq" id="NP_003052.2">
    <molecule id="O75093-1"/>
    <property type="nucleotide sequence ID" value="NM_003061.3"/>
</dbReference>
<dbReference type="SMR" id="O75093"/>
<dbReference type="BioGRID" id="112472">
    <property type="interactions" value="19"/>
</dbReference>
<dbReference type="FunCoup" id="O75093">
    <property type="interactions" value="238"/>
</dbReference>
<dbReference type="IntAct" id="O75093">
    <property type="interactions" value="18"/>
</dbReference>
<dbReference type="MINT" id="O75093"/>
<dbReference type="STRING" id="9606.ENSP00000266058"/>
<dbReference type="TCDB" id="9.B.87.1.40">
    <property type="family name" value="the selenoprotein p receptor (selp-receptor) family"/>
</dbReference>
<dbReference type="CarbonylDB" id="O75093"/>
<dbReference type="GlyCosmos" id="O75093">
    <property type="glycosylation" value="13 sites, No reported glycans"/>
</dbReference>
<dbReference type="GlyGen" id="O75093">
    <property type="glycosylation" value="20 sites, 2 N-linked glycans (2 sites)"/>
</dbReference>
<dbReference type="iPTMnet" id="O75093"/>
<dbReference type="PhosphoSitePlus" id="O75093"/>
<dbReference type="BioMuta" id="SLIT1"/>
<dbReference type="jPOST" id="O75093"/>
<dbReference type="MassIVE" id="O75093"/>
<dbReference type="PaxDb" id="9606-ENSP00000266058"/>
<dbReference type="PeptideAtlas" id="O75093"/>
<dbReference type="ProteomicsDB" id="49753">
    <molecule id="O75093-1"/>
</dbReference>
<dbReference type="ProteomicsDB" id="49754">
    <molecule id="O75093-2"/>
</dbReference>
<dbReference type="Pumba" id="O75093"/>
<dbReference type="Antibodypedia" id="1515">
    <property type="antibodies" value="190 antibodies from 27 providers"/>
</dbReference>
<dbReference type="DNASU" id="6585"/>
<dbReference type="Ensembl" id="ENST00000266058.9">
    <molecule id="O75093-1"/>
    <property type="protein sequence ID" value="ENSP00000266058.4"/>
    <property type="gene ID" value="ENSG00000187122.17"/>
</dbReference>
<dbReference type="GeneID" id="6585"/>
<dbReference type="KEGG" id="hsa:6585"/>
<dbReference type="MANE-Select" id="ENST00000266058.9">
    <property type="protein sequence ID" value="ENSP00000266058.4"/>
    <property type="RefSeq nucleotide sequence ID" value="NM_003061.3"/>
    <property type="RefSeq protein sequence ID" value="NP_003052.2"/>
</dbReference>
<dbReference type="UCSC" id="uc001kmw.3">
    <molecule id="O75093-1"/>
    <property type="organism name" value="human"/>
</dbReference>
<dbReference type="AGR" id="HGNC:11085"/>
<dbReference type="CTD" id="6585"/>
<dbReference type="DisGeNET" id="6585"/>
<dbReference type="GeneCards" id="SLIT1"/>
<dbReference type="HGNC" id="HGNC:11085">
    <property type="gene designation" value="SLIT1"/>
</dbReference>
<dbReference type="HPA" id="ENSG00000187122">
    <property type="expression patterns" value="Group enriched (brain, pituitary gland)"/>
</dbReference>
<dbReference type="MIM" id="603742">
    <property type="type" value="gene"/>
</dbReference>
<dbReference type="neXtProt" id="NX_O75093"/>
<dbReference type="OpenTargets" id="ENSG00000187122"/>
<dbReference type="PharmGKB" id="PA35938"/>
<dbReference type="VEuPathDB" id="HostDB:ENSG00000187122"/>
<dbReference type="eggNOG" id="KOG4237">
    <property type="taxonomic scope" value="Eukaryota"/>
</dbReference>
<dbReference type="GeneTree" id="ENSGT00940000157322"/>
<dbReference type="HOGENOM" id="CLU_001431_2_0_1"/>
<dbReference type="InParanoid" id="O75093"/>
<dbReference type="OMA" id="ETKCQNN"/>
<dbReference type="OrthoDB" id="283575at2759"/>
<dbReference type="PAN-GO" id="O75093">
    <property type="GO annotations" value="5 GO annotations based on evolutionary models"/>
</dbReference>
<dbReference type="PhylomeDB" id="O75093"/>
<dbReference type="TreeFam" id="TF332887"/>
<dbReference type="PathwayCommons" id="O75093"/>
<dbReference type="Reactome" id="R-HSA-373752">
    <property type="pathway name" value="Netrin-1 signaling"/>
</dbReference>
<dbReference type="Reactome" id="R-HSA-376176">
    <property type="pathway name" value="Signaling by ROBO receptors"/>
</dbReference>
<dbReference type="Reactome" id="R-HSA-428542">
    <property type="pathway name" value="Regulation of commissural axon pathfinding by SLIT and ROBO"/>
</dbReference>
<dbReference type="Reactome" id="R-HSA-8985801">
    <property type="pathway name" value="Regulation of cortical dendrite branching"/>
</dbReference>
<dbReference type="Reactome" id="R-HSA-9010553">
    <property type="pathway name" value="Regulation of expression of SLITs and ROBOs"/>
</dbReference>
<dbReference type="SignaLink" id="O75093"/>
<dbReference type="SIGNOR" id="O75093"/>
<dbReference type="BioGRID-ORCS" id="6585">
    <property type="hits" value="14 hits in 1146 CRISPR screens"/>
</dbReference>
<dbReference type="ChiTaRS" id="SLIT1">
    <property type="organism name" value="human"/>
</dbReference>
<dbReference type="GeneWiki" id="SLIT1"/>
<dbReference type="GenomeRNAi" id="6585"/>
<dbReference type="Pharos" id="O75093">
    <property type="development level" value="Tbio"/>
</dbReference>
<dbReference type="PRO" id="PR:O75093"/>
<dbReference type="Proteomes" id="UP000005640">
    <property type="component" value="Chromosome 10"/>
</dbReference>
<dbReference type="RNAct" id="O75093">
    <property type="molecule type" value="protein"/>
</dbReference>
<dbReference type="Bgee" id="ENSG00000187122">
    <property type="expression patterns" value="Expressed in cortical plate and 142 other cell types or tissues"/>
</dbReference>
<dbReference type="ExpressionAtlas" id="O75093">
    <property type="expression patterns" value="baseline and differential"/>
</dbReference>
<dbReference type="GO" id="GO:0005615">
    <property type="term" value="C:extracellular space"/>
    <property type="evidence" value="ECO:0000318"/>
    <property type="project" value="GO_Central"/>
</dbReference>
<dbReference type="GO" id="GO:0005509">
    <property type="term" value="F:calcium ion binding"/>
    <property type="evidence" value="ECO:0000303"/>
    <property type="project" value="UniProtKB"/>
</dbReference>
<dbReference type="GO" id="GO:0043395">
    <property type="term" value="F:heparan sulfate proteoglycan binding"/>
    <property type="evidence" value="ECO:0007669"/>
    <property type="project" value="Ensembl"/>
</dbReference>
<dbReference type="GO" id="GO:0008201">
    <property type="term" value="F:heparin binding"/>
    <property type="evidence" value="ECO:0000318"/>
    <property type="project" value="GO_Central"/>
</dbReference>
<dbReference type="GO" id="GO:0048495">
    <property type="term" value="F:Roundabout binding"/>
    <property type="evidence" value="ECO:0000353"/>
    <property type="project" value="UniProtKB"/>
</dbReference>
<dbReference type="GO" id="GO:0048846">
    <property type="term" value="P:axon extension involved in axon guidance"/>
    <property type="evidence" value="ECO:0000314"/>
    <property type="project" value="UniProtKB"/>
</dbReference>
<dbReference type="GO" id="GO:0007411">
    <property type="term" value="P:axon guidance"/>
    <property type="evidence" value="ECO:0000314"/>
    <property type="project" value="UniProtKB"/>
</dbReference>
<dbReference type="GO" id="GO:0033563">
    <property type="term" value="P:dorsal/ventral axon guidance"/>
    <property type="evidence" value="ECO:0007669"/>
    <property type="project" value="Ensembl"/>
</dbReference>
<dbReference type="GO" id="GO:0048853">
    <property type="term" value="P:forebrain morphogenesis"/>
    <property type="evidence" value="ECO:0000303"/>
    <property type="project" value="UniProtKB"/>
</dbReference>
<dbReference type="GO" id="GO:0008045">
    <property type="term" value="P:motor neuron axon guidance"/>
    <property type="evidence" value="ECO:0000315"/>
    <property type="project" value="UniProtKB"/>
</dbReference>
<dbReference type="GO" id="GO:0050919">
    <property type="term" value="P:negative chemotaxis"/>
    <property type="evidence" value="ECO:0000314"/>
    <property type="project" value="UniProtKB"/>
</dbReference>
<dbReference type="GO" id="GO:0048843">
    <property type="term" value="P:negative regulation of axon extension involved in axon guidance"/>
    <property type="evidence" value="ECO:0007669"/>
    <property type="project" value="Ensembl"/>
</dbReference>
<dbReference type="GO" id="GO:0051964">
    <property type="term" value="P:negative regulation of synapse assembly"/>
    <property type="evidence" value="ECO:0000250"/>
    <property type="project" value="UniProtKB"/>
</dbReference>
<dbReference type="GO" id="GO:0007097">
    <property type="term" value="P:nuclear migration"/>
    <property type="evidence" value="ECO:0007669"/>
    <property type="project" value="Ensembl"/>
</dbReference>
<dbReference type="GO" id="GO:0031290">
    <property type="term" value="P:retinal ganglion cell axon guidance"/>
    <property type="evidence" value="ECO:0007669"/>
    <property type="project" value="Ensembl"/>
</dbReference>
<dbReference type="GO" id="GO:0021510">
    <property type="term" value="P:spinal cord development"/>
    <property type="evidence" value="ECO:0007669"/>
    <property type="project" value="Ensembl"/>
</dbReference>
<dbReference type="GO" id="GO:0022028">
    <property type="term" value="P:tangential migration from the subventricular zone to the olfactory bulb"/>
    <property type="evidence" value="ECO:0007669"/>
    <property type="project" value="Ensembl"/>
</dbReference>
<dbReference type="CDD" id="cd00054">
    <property type="entry name" value="EGF_CA"/>
    <property type="match status" value="6"/>
</dbReference>
<dbReference type="CDD" id="cd00110">
    <property type="entry name" value="LamG"/>
    <property type="match status" value="1"/>
</dbReference>
<dbReference type="FunFam" id="2.10.25.10:FF:000080">
    <property type="entry name" value="Neurogenic locus notch 1"/>
    <property type="match status" value="1"/>
</dbReference>
<dbReference type="FunFam" id="3.80.10.10:FF:000290">
    <property type="entry name" value="Slit guidance ligand 1"/>
    <property type="match status" value="1"/>
</dbReference>
<dbReference type="FunFam" id="2.10.25.10:FF:000045">
    <property type="entry name" value="Slit guidance ligand 2"/>
    <property type="match status" value="1"/>
</dbReference>
<dbReference type="FunFam" id="2.10.25.10:FF:000053">
    <property type="entry name" value="Slit guidance ligand 2"/>
    <property type="match status" value="1"/>
</dbReference>
<dbReference type="FunFam" id="2.10.25.10:FF:000054">
    <property type="entry name" value="Slit guidance ligand 2"/>
    <property type="match status" value="1"/>
</dbReference>
<dbReference type="FunFam" id="2.10.25.10:FF:000062">
    <property type="entry name" value="Slit guidance ligand 2"/>
    <property type="match status" value="1"/>
</dbReference>
<dbReference type="FunFam" id="2.10.25.10:FF:000063">
    <property type="entry name" value="Slit guidance ligand 2"/>
    <property type="match status" value="1"/>
</dbReference>
<dbReference type="FunFam" id="2.60.120.200:FF:000013">
    <property type="entry name" value="Slit guidance ligand 2"/>
    <property type="match status" value="1"/>
</dbReference>
<dbReference type="FunFam" id="3.80.10.10:FF:000002">
    <property type="entry name" value="Slit guidance ligand 2"/>
    <property type="match status" value="2"/>
</dbReference>
<dbReference type="FunFam" id="3.80.10.10:FF:000004">
    <property type="entry name" value="Slit guidance ligand 2"/>
    <property type="match status" value="1"/>
</dbReference>
<dbReference type="FunFam" id="2.10.25.10:FF:000389">
    <property type="entry name" value="slit homolog 1 protein"/>
    <property type="match status" value="1"/>
</dbReference>
<dbReference type="FunFam" id="2.10.25.10:FF:000186">
    <property type="entry name" value="Slit homolog 2 (Drosophila)"/>
    <property type="match status" value="1"/>
</dbReference>
<dbReference type="FunFam" id="3.80.10.10:FF:000032">
    <property type="entry name" value="Slit homolog 2 (Drosophila)"/>
    <property type="match status" value="1"/>
</dbReference>
<dbReference type="Gene3D" id="2.60.120.200">
    <property type="match status" value="1"/>
</dbReference>
<dbReference type="Gene3D" id="2.10.25.10">
    <property type="entry name" value="Laminin"/>
    <property type="match status" value="8"/>
</dbReference>
<dbReference type="Gene3D" id="3.80.10.10">
    <property type="entry name" value="Ribonuclease Inhibitor"/>
    <property type="match status" value="5"/>
</dbReference>
<dbReference type="InterPro" id="IPR013320">
    <property type="entry name" value="ConA-like_dom_sf"/>
</dbReference>
<dbReference type="InterPro" id="IPR000483">
    <property type="entry name" value="Cys-rich_flank_reg_C"/>
</dbReference>
<dbReference type="InterPro" id="IPR006207">
    <property type="entry name" value="Cys_knot_C"/>
</dbReference>
<dbReference type="InterPro" id="IPR001881">
    <property type="entry name" value="EGF-like_Ca-bd_dom"/>
</dbReference>
<dbReference type="InterPro" id="IPR013032">
    <property type="entry name" value="EGF-like_CS"/>
</dbReference>
<dbReference type="InterPro" id="IPR000742">
    <property type="entry name" value="EGF-like_dom"/>
</dbReference>
<dbReference type="InterPro" id="IPR000152">
    <property type="entry name" value="EGF-type_Asp/Asn_hydroxyl_site"/>
</dbReference>
<dbReference type="InterPro" id="IPR018097">
    <property type="entry name" value="EGF_Ca-bd_CS"/>
</dbReference>
<dbReference type="InterPro" id="IPR003645">
    <property type="entry name" value="Fol_N"/>
</dbReference>
<dbReference type="InterPro" id="IPR009030">
    <property type="entry name" value="Growth_fac_rcpt_cys_sf"/>
</dbReference>
<dbReference type="InterPro" id="IPR001791">
    <property type="entry name" value="Laminin_G"/>
</dbReference>
<dbReference type="InterPro" id="IPR001611">
    <property type="entry name" value="Leu-rich_rpt"/>
</dbReference>
<dbReference type="InterPro" id="IPR003591">
    <property type="entry name" value="Leu-rich_rpt_typical-subtyp"/>
</dbReference>
<dbReference type="InterPro" id="IPR032675">
    <property type="entry name" value="LRR_dom_sf"/>
</dbReference>
<dbReference type="InterPro" id="IPR000372">
    <property type="entry name" value="LRRNT"/>
</dbReference>
<dbReference type="InterPro" id="IPR051355">
    <property type="entry name" value="Notch/Slit_guidance"/>
</dbReference>
<dbReference type="PANTHER" id="PTHR45836">
    <property type="entry name" value="SLIT HOMOLOG"/>
    <property type="match status" value="1"/>
</dbReference>
<dbReference type="PANTHER" id="PTHR45836:SF3">
    <property type="entry name" value="SLIT HOMOLOG 1 PROTEIN"/>
    <property type="match status" value="1"/>
</dbReference>
<dbReference type="Pfam" id="PF00008">
    <property type="entry name" value="EGF"/>
    <property type="match status" value="5"/>
</dbReference>
<dbReference type="Pfam" id="PF12661">
    <property type="entry name" value="hEGF"/>
    <property type="match status" value="1"/>
</dbReference>
<dbReference type="Pfam" id="PF02210">
    <property type="entry name" value="Laminin_G_2"/>
    <property type="match status" value="1"/>
</dbReference>
<dbReference type="Pfam" id="PF13855">
    <property type="entry name" value="LRR_8"/>
    <property type="match status" value="6"/>
</dbReference>
<dbReference type="Pfam" id="PF01463">
    <property type="entry name" value="LRRCT"/>
    <property type="match status" value="4"/>
</dbReference>
<dbReference type="Pfam" id="PF01462">
    <property type="entry name" value="LRRNT"/>
    <property type="match status" value="3"/>
</dbReference>
<dbReference type="SMART" id="SM00041">
    <property type="entry name" value="CT"/>
    <property type="match status" value="1"/>
</dbReference>
<dbReference type="SMART" id="SM00181">
    <property type="entry name" value="EGF"/>
    <property type="match status" value="9"/>
</dbReference>
<dbReference type="SMART" id="SM00179">
    <property type="entry name" value="EGF_CA"/>
    <property type="match status" value="7"/>
</dbReference>
<dbReference type="SMART" id="SM00274">
    <property type="entry name" value="FOLN"/>
    <property type="match status" value="4"/>
</dbReference>
<dbReference type="SMART" id="SM00282">
    <property type="entry name" value="LamG"/>
    <property type="match status" value="1"/>
</dbReference>
<dbReference type="SMART" id="SM00365">
    <property type="entry name" value="LRR_SD22"/>
    <property type="match status" value="8"/>
</dbReference>
<dbReference type="SMART" id="SM00369">
    <property type="entry name" value="LRR_TYP"/>
    <property type="match status" value="18"/>
</dbReference>
<dbReference type="SMART" id="SM00082">
    <property type="entry name" value="LRRCT"/>
    <property type="match status" value="4"/>
</dbReference>
<dbReference type="SMART" id="SM00013">
    <property type="entry name" value="LRRNT"/>
    <property type="match status" value="4"/>
</dbReference>
<dbReference type="SUPFAM" id="SSF49899">
    <property type="entry name" value="Concanavalin A-like lectins/glucanases"/>
    <property type="match status" value="1"/>
</dbReference>
<dbReference type="SUPFAM" id="SSF57196">
    <property type="entry name" value="EGF/Laminin"/>
    <property type="match status" value="4"/>
</dbReference>
<dbReference type="SUPFAM" id="SSF57184">
    <property type="entry name" value="Growth factor receptor domain"/>
    <property type="match status" value="1"/>
</dbReference>
<dbReference type="SUPFAM" id="SSF52058">
    <property type="entry name" value="L domain-like"/>
    <property type="match status" value="2"/>
</dbReference>
<dbReference type="PROSITE" id="PS01185">
    <property type="entry name" value="CTCK_1"/>
    <property type="match status" value="1"/>
</dbReference>
<dbReference type="PROSITE" id="PS01225">
    <property type="entry name" value="CTCK_2"/>
    <property type="match status" value="1"/>
</dbReference>
<dbReference type="PROSITE" id="PS00022">
    <property type="entry name" value="EGF_1"/>
    <property type="match status" value="9"/>
</dbReference>
<dbReference type="PROSITE" id="PS01186">
    <property type="entry name" value="EGF_2"/>
    <property type="match status" value="8"/>
</dbReference>
<dbReference type="PROSITE" id="PS50026">
    <property type="entry name" value="EGF_3"/>
    <property type="match status" value="9"/>
</dbReference>
<dbReference type="PROSITE" id="PS01187">
    <property type="entry name" value="EGF_CA"/>
    <property type="match status" value="2"/>
</dbReference>
<dbReference type="PROSITE" id="PS50025">
    <property type="entry name" value="LAM_G_DOMAIN"/>
    <property type="match status" value="1"/>
</dbReference>
<dbReference type="PROSITE" id="PS51450">
    <property type="entry name" value="LRR"/>
    <property type="match status" value="21"/>
</dbReference>
<protein>
    <recommendedName>
        <fullName>Slit homolog 1 protein</fullName>
        <shortName>Slit-1</shortName>
    </recommendedName>
    <alternativeName>
        <fullName>Multiple epidermal growth factor-like domains protein 4</fullName>
        <shortName>Multiple EGF-like domains protein 4</shortName>
    </alternativeName>
</protein>
<organism>
    <name type="scientific">Homo sapiens</name>
    <name type="common">Human</name>
    <dbReference type="NCBI Taxonomy" id="9606"/>
    <lineage>
        <taxon>Eukaryota</taxon>
        <taxon>Metazoa</taxon>
        <taxon>Chordata</taxon>
        <taxon>Craniata</taxon>
        <taxon>Vertebrata</taxon>
        <taxon>Euteleostomi</taxon>
        <taxon>Mammalia</taxon>
        <taxon>Eutheria</taxon>
        <taxon>Euarchontoglires</taxon>
        <taxon>Primates</taxon>
        <taxon>Haplorrhini</taxon>
        <taxon>Catarrhini</taxon>
        <taxon>Hominidae</taxon>
        <taxon>Homo</taxon>
    </lineage>
</organism>
<comment type="function">
    <text evidence="1">Thought to act as molecular guidance cue in cellular migration, and function appears to be mediated by interaction with roundabout homolog receptors. During neural development involved in axonal navigation at the ventral midline of the neural tube and projection of axons to different regions (By similarity). SLIT1 and SLIT2 together seem to be essential for midline guidance in the forebrain by acting as repulsive signal preventing inappropriate midline crossing by axons projecting from the olfactory bulb.</text>
</comment>
<comment type="subunit">
    <text evidence="1">Interacts with ROBO1 and GREM1.</text>
</comment>
<comment type="interaction">
    <interactant intactId="EBI-947791">
        <id>O75093</id>
    </interactant>
    <interactant intactId="EBI-10173507">
        <id>Q6UY14-3</id>
        <label>ADAMTSL4</label>
    </interactant>
    <organismsDiffer>false</organismsDiffer>
    <experiments>3</experiments>
</comment>
<comment type="interaction">
    <interactant intactId="EBI-947791">
        <id>O75093</id>
    </interactant>
    <interactant intactId="EBI-12593838">
        <id>Q6WN34-2</id>
        <label>CHRDL2</label>
    </interactant>
    <organismsDiffer>false</organismsDiffer>
    <experiments>3</experiments>
</comment>
<comment type="interaction">
    <interactant intactId="EBI-947791">
        <id>O75093</id>
    </interactant>
    <interactant intactId="EBI-3867333">
        <id>A8MQ03</id>
        <label>CYSRT1</label>
    </interactant>
    <organismsDiffer>false</organismsDiffer>
    <experiments>3</experiments>
</comment>
<comment type="interaction">
    <interactant intactId="EBI-947791">
        <id>O75093</id>
    </interactant>
    <interactant intactId="EBI-750641">
        <id>Q5TD97</id>
        <label>FHL5</label>
    </interactant>
    <organismsDiffer>false</organismsDiffer>
    <experiments>3</experiments>
</comment>
<comment type="interaction">
    <interactant intactId="EBI-947791">
        <id>O75093</id>
    </interactant>
    <interactant intactId="EBI-740785">
        <id>P49639</id>
        <label>HOXA1</label>
    </interactant>
    <organismsDiffer>false</organismsDiffer>
    <experiments>4</experiments>
</comment>
<comment type="interaction">
    <interactant intactId="EBI-947791">
        <id>O75093</id>
    </interactant>
    <interactant intactId="EBI-11959885">
        <id>Q07627</id>
        <label>KRTAP1-1</label>
    </interactant>
    <organismsDiffer>false</organismsDiffer>
    <experiments>3</experiments>
</comment>
<comment type="interaction">
    <interactant intactId="EBI-947791">
        <id>O75093</id>
    </interactant>
    <interactant intactId="EBI-10171774">
        <id>P60410</id>
        <label>KRTAP10-8</label>
    </interactant>
    <organismsDiffer>false</organismsDiffer>
    <experiments>3</experiments>
</comment>
<comment type="interaction">
    <interactant intactId="EBI-947791">
        <id>O75093</id>
    </interactant>
    <interactant intactId="EBI-11953846">
        <id>Q52LG2</id>
        <label>KRTAP13-2</label>
    </interactant>
    <organismsDiffer>false</organismsDiffer>
    <experiments>3</experiments>
</comment>
<comment type="interaction">
    <interactant intactId="EBI-947791">
        <id>O75093</id>
    </interactant>
    <interactant intactId="EBI-10241252">
        <id>Q3SY46</id>
        <label>KRTAP13-3</label>
    </interactant>
    <organismsDiffer>false</organismsDiffer>
    <experiments>3</experiments>
</comment>
<comment type="interaction">
    <interactant intactId="EBI-947791">
        <id>O75093</id>
    </interactant>
    <interactant intactId="EBI-16439278">
        <id>Q6FHY5</id>
        <label>MEOX2</label>
    </interactant>
    <organismsDiffer>false</organismsDiffer>
    <experiments>3</experiments>
</comment>
<comment type="interaction">
    <interactant intactId="EBI-947791">
        <id>O75093</id>
    </interactant>
    <interactant intactId="EBI-5235829">
        <id>Q8IWZ5</id>
        <label>TRIM42</label>
    </interactant>
    <organismsDiffer>false</organismsDiffer>
    <experiments>3</experiments>
</comment>
<comment type="interaction">
    <interactant intactId="EBI-947791">
        <id>O75093</id>
    </interactant>
    <interactant intactId="EBI-4395669">
        <id>Q6ZNG0</id>
        <label>ZNF620</label>
    </interactant>
    <organismsDiffer>false</organismsDiffer>
    <experiments>3</experiments>
</comment>
<comment type="subcellular location">
    <subcellularLocation>
        <location evidence="1">Secreted</location>
    </subcellularLocation>
</comment>
<comment type="alternative products">
    <event type="alternative splicing"/>
    <isoform>
        <id>O75093-1</id>
        <name>1</name>
        <sequence type="displayed"/>
    </isoform>
    <isoform>
        <id>O75093-2</id>
        <name>2</name>
        <name>B</name>
        <sequence type="described" ref="VSP_009706 VSP_009707 VSP_009708"/>
    </isoform>
</comment>
<comment type="tissue specificity">
    <text evidence="6">Predominantly expressed in adult forebrain. Expressed in fetal brain, lung and kidney.</text>
</comment>
<comment type="sequence caution" evidence="8">
    <conflict type="erroneous initiation">
        <sequence resource="EMBL-CDS" id="BAA32465"/>
    </conflict>
</comment>
<keyword id="KW-0025">Alternative splicing</keyword>
<keyword id="KW-0217">Developmental protein</keyword>
<keyword id="KW-0221">Differentiation</keyword>
<keyword id="KW-1015">Disulfide bond</keyword>
<keyword id="KW-0245">EGF-like domain</keyword>
<keyword id="KW-0325">Glycoprotein</keyword>
<keyword id="KW-0433">Leucine-rich repeat</keyword>
<keyword id="KW-0524">Neurogenesis</keyword>
<keyword id="KW-1267">Proteomics identification</keyword>
<keyword id="KW-1185">Reference proteome</keyword>
<keyword id="KW-0677">Repeat</keyword>
<keyword id="KW-0964">Secreted</keyword>
<keyword id="KW-0732">Signal</keyword>
<reference key="1">
    <citation type="journal article" date="1998" name="Brain Res. Mol. Brain Res.">
        <title>Cloning and expressions of three mammalian homologues of Drosophila slit suggest possible roles for Slit in the formation and maintenance of the nervous system.</title>
        <authorList>
            <person name="Itoh A."/>
            <person name="Miyabayashi T."/>
            <person name="Ohno M."/>
            <person name="Sakano S."/>
        </authorList>
    </citation>
    <scope>NUCLEOTIDE SEQUENCE [MRNA] (ISOFORM 1)</scope>
    <scope>TISSUE SPECIFICITY</scope>
</reference>
<reference key="2">
    <citation type="journal article" date="1998" name="Genomics">
        <title>Identification of high-molecular-weight proteins with multiple EGF-like motifs by motif-trap screening.</title>
        <authorList>
            <person name="Nakayama M."/>
            <person name="Nakajima D."/>
            <person name="Nagase T."/>
            <person name="Nomura N."/>
            <person name="Seki N."/>
            <person name="Ohara O."/>
        </authorList>
    </citation>
    <scope>NUCLEOTIDE SEQUENCE [MRNA] (ISOFORM 1)</scope>
    <source>
        <tissue>Brain</tissue>
    </source>
</reference>
<reference key="3">
    <citation type="journal article" date="2002" name="DNA Res.">
        <title>Construction of expression-ready cDNA clones for KIAA genes: manual curation of 330 KIAA cDNA clones.</title>
        <authorList>
            <person name="Nakajima D."/>
            <person name="Okazaki N."/>
            <person name="Yamakawa H."/>
            <person name="Kikuno R."/>
            <person name="Ohara O."/>
            <person name="Nagase T."/>
        </authorList>
    </citation>
    <scope>SEQUENCE REVISION</scope>
</reference>
<reference key="4">
    <citation type="submission" date="2005-04" db="EMBL/GenBank/DDBJ databases">
        <authorList>
            <person name="Nakayama M."/>
            <person name="Nakajima D."/>
            <person name="Ohara O."/>
        </authorList>
    </citation>
    <scope>SEQUENCE REVISION</scope>
</reference>
<reference key="5">
    <citation type="journal article" date="2004" name="Nature">
        <title>The DNA sequence and comparative analysis of human chromosome 10.</title>
        <authorList>
            <person name="Deloukas P."/>
            <person name="Earthrowl M.E."/>
            <person name="Grafham D.V."/>
            <person name="Rubenfield M."/>
            <person name="French L."/>
            <person name="Steward C.A."/>
            <person name="Sims S.K."/>
            <person name="Jones M.C."/>
            <person name="Searle S."/>
            <person name="Scott C."/>
            <person name="Howe K."/>
            <person name="Hunt S.E."/>
            <person name="Andrews T.D."/>
            <person name="Gilbert J.G.R."/>
            <person name="Swarbreck D."/>
            <person name="Ashurst J.L."/>
            <person name="Taylor A."/>
            <person name="Battles J."/>
            <person name="Bird C.P."/>
            <person name="Ainscough R."/>
            <person name="Almeida J.P."/>
            <person name="Ashwell R.I.S."/>
            <person name="Ambrose K.D."/>
            <person name="Babbage A.K."/>
            <person name="Bagguley C.L."/>
            <person name="Bailey J."/>
            <person name="Banerjee R."/>
            <person name="Bates K."/>
            <person name="Beasley H."/>
            <person name="Bray-Allen S."/>
            <person name="Brown A.J."/>
            <person name="Brown J.Y."/>
            <person name="Burford D.C."/>
            <person name="Burrill W."/>
            <person name="Burton J."/>
            <person name="Cahill P."/>
            <person name="Camire D."/>
            <person name="Carter N.P."/>
            <person name="Chapman J.C."/>
            <person name="Clark S.Y."/>
            <person name="Clarke G."/>
            <person name="Clee C.M."/>
            <person name="Clegg S."/>
            <person name="Corby N."/>
            <person name="Coulson A."/>
            <person name="Dhami P."/>
            <person name="Dutta I."/>
            <person name="Dunn M."/>
            <person name="Faulkner L."/>
            <person name="Frankish A."/>
            <person name="Frankland J.A."/>
            <person name="Garner P."/>
            <person name="Garnett J."/>
            <person name="Gribble S."/>
            <person name="Griffiths C."/>
            <person name="Grocock R."/>
            <person name="Gustafson E."/>
            <person name="Hammond S."/>
            <person name="Harley J.L."/>
            <person name="Hart E."/>
            <person name="Heath P.D."/>
            <person name="Ho T.P."/>
            <person name="Hopkins B."/>
            <person name="Horne J."/>
            <person name="Howden P.J."/>
            <person name="Huckle E."/>
            <person name="Hynds C."/>
            <person name="Johnson C."/>
            <person name="Johnson D."/>
            <person name="Kana A."/>
            <person name="Kay M."/>
            <person name="Kimberley A.M."/>
            <person name="Kershaw J.K."/>
            <person name="Kokkinaki M."/>
            <person name="Laird G.K."/>
            <person name="Lawlor S."/>
            <person name="Lee H.M."/>
            <person name="Leongamornlert D.A."/>
            <person name="Laird G."/>
            <person name="Lloyd C."/>
            <person name="Lloyd D.M."/>
            <person name="Loveland J."/>
            <person name="Lovell J."/>
            <person name="McLaren S."/>
            <person name="McLay K.E."/>
            <person name="McMurray A."/>
            <person name="Mashreghi-Mohammadi M."/>
            <person name="Matthews L."/>
            <person name="Milne S."/>
            <person name="Nickerson T."/>
            <person name="Nguyen M."/>
            <person name="Overton-Larty E."/>
            <person name="Palmer S.A."/>
            <person name="Pearce A.V."/>
            <person name="Peck A.I."/>
            <person name="Pelan S."/>
            <person name="Phillimore B."/>
            <person name="Porter K."/>
            <person name="Rice C.M."/>
            <person name="Rogosin A."/>
            <person name="Ross M.T."/>
            <person name="Sarafidou T."/>
            <person name="Sehra H.K."/>
            <person name="Shownkeen R."/>
            <person name="Skuce C.D."/>
            <person name="Smith M."/>
            <person name="Standring L."/>
            <person name="Sycamore N."/>
            <person name="Tester J."/>
            <person name="Thorpe A."/>
            <person name="Torcasso W."/>
            <person name="Tracey A."/>
            <person name="Tromans A."/>
            <person name="Tsolas J."/>
            <person name="Wall M."/>
            <person name="Walsh J."/>
            <person name="Wang H."/>
            <person name="Weinstock K."/>
            <person name="West A.P."/>
            <person name="Willey D.L."/>
            <person name="Whitehead S.L."/>
            <person name="Wilming L."/>
            <person name="Wray P.W."/>
            <person name="Young L."/>
            <person name="Chen Y."/>
            <person name="Lovering R.C."/>
            <person name="Moschonas N.K."/>
            <person name="Siebert R."/>
            <person name="Fechtel K."/>
            <person name="Bentley D."/>
            <person name="Durbin R.M."/>
            <person name="Hubbard T."/>
            <person name="Doucette-Stamm L."/>
            <person name="Beck S."/>
            <person name="Smith D.R."/>
            <person name="Rogers J."/>
        </authorList>
    </citation>
    <scope>NUCLEOTIDE SEQUENCE [LARGE SCALE GENOMIC DNA]</scope>
</reference>
<reference key="6">
    <citation type="submission" date="2005-09" db="EMBL/GenBank/DDBJ databases">
        <authorList>
            <person name="Mural R.J."/>
            <person name="Istrail S."/>
            <person name="Sutton G."/>
            <person name="Florea L."/>
            <person name="Halpern A.L."/>
            <person name="Mobarry C.M."/>
            <person name="Lippert R."/>
            <person name="Walenz B."/>
            <person name="Shatkay H."/>
            <person name="Dew I."/>
            <person name="Miller J.R."/>
            <person name="Flanigan M.J."/>
            <person name="Edwards N.J."/>
            <person name="Bolanos R."/>
            <person name="Fasulo D."/>
            <person name="Halldorsson B.V."/>
            <person name="Hannenhalli S."/>
            <person name="Turner R."/>
            <person name="Yooseph S."/>
            <person name="Lu F."/>
            <person name="Nusskern D.R."/>
            <person name="Shue B.C."/>
            <person name="Zheng X.H."/>
            <person name="Zhong F."/>
            <person name="Delcher A.L."/>
            <person name="Huson D.H."/>
            <person name="Kravitz S.A."/>
            <person name="Mouchard L."/>
            <person name="Reinert K."/>
            <person name="Remington K.A."/>
            <person name="Clark A.G."/>
            <person name="Waterman M.S."/>
            <person name="Eichler E.E."/>
            <person name="Adams M.D."/>
            <person name="Hunkapiller M.W."/>
            <person name="Myers E.W."/>
            <person name="Venter J.C."/>
        </authorList>
    </citation>
    <scope>NUCLEOTIDE SEQUENCE [LARGE SCALE GENOMIC DNA]</scope>
</reference>
<reference key="7">
    <citation type="journal article" date="2004" name="Genome Res.">
        <title>The status, quality, and expansion of the NIH full-length cDNA project: the Mammalian Gene Collection (MGC).</title>
        <authorList>
            <consortium name="The MGC Project Team"/>
        </authorList>
    </citation>
    <scope>NUCLEOTIDE SEQUENCE [LARGE SCALE MRNA] (ISOFORM 1)</scope>
</reference>
<reference key="8">
    <citation type="journal article" date="2002" name="Int. J. Dev. Biol.">
        <title>Conserved modularity and potential for alternate splicing in mouse and human Slit genes.</title>
        <authorList>
            <person name="Little M."/>
            <person name="Rumballe B."/>
            <person name="Georgas K."/>
            <person name="Yamada T."/>
            <person name="Teasdale R.D."/>
        </authorList>
    </citation>
    <scope>NUCLEOTIDE SEQUENCE [MRNA] OF 18-1534 (ISOFORM 2)</scope>
</reference>
<reference key="9">
    <citation type="journal article" date="2002" name="Curr. Opin. Genet. Dev.">
        <title>Slit proteins: molecular guidance cues for cells ranging from neurons to leukocytes.</title>
        <authorList>
            <person name="Wong K."/>
            <person name="Park H.T."/>
            <person name="Wu J.Y."/>
            <person name="Rao Y."/>
        </authorList>
    </citation>
    <scope>REVIEW</scope>
</reference>
<feature type="signal peptide" evidence="2">
    <location>
        <begin position="1"/>
        <end position="33"/>
    </location>
</feature>
<feature type="chain" id="PRO_0000007722" description="Slit homolog 1 protein">
    <location>
        <begin position="34"/>
        <end position="1534"/>
    </location>
</feature>
<feature type="domain" description="LRRNT">
    <location>
        <begin position="34"/>
        <end position="61"/>
    </location>
</feature>
<feature type="repeat" description="LRR 1">
    <location>
        <begin position="62"/>
        <end position="83"/>
    </location>
</feature>
<feature type="repeat" description="LRR 2">
    <location>
        <begin position="86"/>
        <end position="107"/>
    </location>
</feature>
<feature type="repeat" description="LRR 3">
    <location>
        <begin position="110"/>
        <end position="131"/>
    </location>
</feature>
<feature type="repeat" description="LRR 4">
    <location>
        <begin position="134"/>
        <end position="155"/>
    </location>
</feature>
<feature type="repeat" description="LRR 5">
    <location>
        <begin position="158"/>
        <end position="179"/>
    </location>
</feature>
<feature type="repeat" description="LRR 6">
    <location>
        <begin position="182"/>
        <end position="203"/>
    </location>
</feature>
<feature type="domain" description="LRRCT 1">
    <location>
        <begin position="215"/>
        <end position="265"/>
    </location>
</feature>
<feature type="domain" description="LRRNT 2">
    <location>
        <begin position="273"/>
        <end position="309"/>
    </location>
</feature>
<feature type="repeat" description="LRR 7">
    <location>
        <begin position="310"/>
        <end position="331"/>
    </location>
</feature>
<feature type="repeat" description="LRR 8">
    <location>
        <begin position="334"/>
        <end position="355"/>
    </location>
</feature>
<feature type="repeat" description="LRR 9">
    <location>
        <begin position="358"/>
        <end position="379"/>
    </location>
</feature>
<feature type="repeat" description="LRR 10">
    <location>
        <begin position="382"/>
        <end position="403"/>
    </location>
</feature>
<feature type="repeat" description="LRR 11">
    <location>
        <begin position="406"/>
        <end position="427"/>
    </location>
</feature>
<feature type="domain" description="LRRCT 2">
    <location>
        <begin position="439"/>
        <end position="489"/>
    </location>
</feature>
<feature type="domain" description="LRRNT 3">
    <location>
        <begin position="504"/>
        <end position="540"/>
    </location>
</feature>
<feature type="repeat" description="LRR 12">
    <location>
        <begin position="541"/>
        <end position="562"/>
    </location>
</feature>
<feature type="repeat" description="LRR 13">
    <location>
        <begin position="566"/>
        <end position="587"/>
    </location>
</feature>
<feature type="repeat" description="LRR 14">
    <location>
        <begin position="590"/>
        <end position="611"/>
    </location>
</feature>
<feature type="repeat" description="LRR 15">
    <location>
        <begin position="614"/>
        <end position="635"/>
    </location>
</feature>
<feature type="repeat" description="LRR 16">
    <location>
        <begin position="638"/>
        <end position="659"/>
    </location>
</feature>
<feature type="domain" description="LRRCT 3">
    <location>
        <begin position="671"/>
        <end position="721"/>
    </location>
</feature>
<feature type="domain" description="LRRNT 4">
    <location>
        <begin position="725"/>
        <end position="761"/>
    </location>
</feature>
<feature type="repeat" description="LRR 17">
    <location>
        <begin position="762"/>
        <end position="783"/>
    </location>
</feature>
<feature type="repeat" description="LRR 18">
    <location>
        <begin position="785"/>
        <end position="806"/>
    </location>
</feature>
<feature type="repeat" description="LRR 19">
    <location>
        <begin position="809"/>
        <end position="830"/>
    </location>
</feature>
<feature type="repeat" description="LRR 20">
    <location>
        <begin position="833"/>
        <end position="854"/>
    </location>
</feature>
<feature type="domain" description="LRRCT 4">
    <location>
        <begin position="866"/>
        <end position="916"/>
    </location>
</feature>
<feature type="domain" description="EGF-like 1" evidence="4">
    <location>
        <begin position="927"/>
        <end position="962"/>
    </location>
</feature>
<feature type="domain" description="EGF-like 2" evidence="4">
    <location>
        <begin position="964"/>
        <end position="1003"/>
    </location>
</feature>
<feature type="domain" description="EGF-like 3" evidence="4">
    <location>
        <begin position="1005"/>
        <end position="1041"/>
    </location>
</feature>
<feature type="domain" description="EGF-like 4" evidence="4">
    <location>
        <begin position="1043"/>
        <end position="1081"/>
    </location>
</feature>
<feature type="domain" description="EGF-like 5" evidence="4">
    <location>
        <begin position="1083"/>
        <end position="1119"/>
    </location>
</feature>
<feature type="domain" description="EGF-like 6" evidence="4">
    <location>
        <begin position="1127"/>
        <end position="1163"/>
    </location>
</feature>
<feature type="domain" description="Laminin G-like" evidence="5">
    <location>
        <begin position="1166"/>
        <end position="1339"/>
    </location>
</feature>
<feature type="domain" description="EGF-like 7" evidence="4">
    <location>
        <begin position="1340"/>
        <end position="1374"/>
    </location>
</feature>
<feature type="domain" description="EGF-like 8" evidence="4">
    <location>
        <begin position="1377"/>
        <end position="1413"/>
    </location>
</feature>
<feature type="domain" description="EGF-like 9" evidence="4">
    <location>
        <begin position="1418"/>
        <end position="1454"/>
    </location>
</feature>
<feature type="domain" description="CTCK" evidence="3">
    <location>
        <begin position="1459"/>
        <end position="1534"/>
    </location>
</feature>
<feature type="glycosylation site" description="N-linked (GlcNAc...) asparagine" evidence="2">
    <location>
        <position position="72"/>
    </location>
</feature>
<feature type="glycosylation site" description="N-linked (GlcNAc...) asparagine" evidence="2">
    <location>
        <position position="192"/>
    </location>
</feature>
<feature type="glycosylation site" description="N-linked (GlcNAc...) asparagine" evidence="2">
    <location>
        <position position="406"/>
    </location>
</feature>
<feature type="glycosylation site" description="N-linked (GlcNAc...) asparagine" evidence="2">
    <location>
        <position position="571"/>
    </location>
</feature>
<feature type="glycosylation site" description="N-linked (GlcNAc...) asparagine" evidence="2">
    <location>
        <position position="630"/>
    </location>
</feature>
<feature type="glycosylation site" description="N-linked (GlcNAc...) asparagine" evidence="2">
    <location>
        <position position="762"/>
    </location>
</feature>
<feature type="glycosylation site" description="N-linked (GlcNAc...) asparagine" evidence="2">
    <location>
        <position position="801"/>
    </location>
</feature>
<feature type="glycosylation site" description="N-linked (GlcNAc...) asparagine" evidence="2">
    <location>
        <position position="806"/>
    </location>
</feature>
<feature type="glycosylation site" description="N-linked (GlcNAc...) asparagine" evidence="2">
    <location>
        <position position="1026"/>
    </location>
</feature>
<feature type="glycosylation site" description="N-linked (GlcNAc...) asparagine" evidence="2">
    <location>
        <position position="1079"/>
    </location>
</feature>
<feature type="glycosylation site" description="N-linked (GlcNAc...) asparagine" evidence="2">
    <location>
        <position position="1189"/>
    </location>
</feature>
<feature type="glycosylation site" description="N-linked (GlcNAc...) asparagine" evidence="2">
    <location>
        <position position="1259"/>
    </location>
</feature>
<feature type="glycosylation site" description="N-linked (GlcNAc...) asparagine" evidence="2">
    <location>
        <position position="1306"/>
    </location>
</feature>
<feature type="disulfide bond" evidence="1">
    <location>
        <begin position="286"/>
        <end position="295"/>
    </location>
</feature>
<feature type="disulfide bond" evidence="1">
    <location>
        <begin position="443"/>
        <end position="466"/>
    </location>
</feature>
<feature type="disulfide bond" evidence="1">
    <location>
        <begin position="445"/>
        <end position="487"/>
    </location>
</feature>
<feature type="disulfide bond" evidence="1">
    <location>
        <begin position="513"/>
        <end position="519"/>
    </location>
</feature>
<feature type="disulfide bond" evidence="1">
    <location>
        <begin position="517"/>
        <end position="526"/>
    </location>
</feature>
<feature type="disulfide bond" evidence="1">
    <location>
        <begin position="675"/>
        <end position="698"/>
    </location>
</feature>
<feature type="disulfide bond" evidence="1">
    <location>
        <begin position="677"/>
        <end position="719"/>
    </location>
</feature>
<feature type="disulfide bond" evidence="1">
    <location>
        <begin position="929"/>
        <end position="940"/>
    </location>
</feature>
<feature type="disulfide bond" evidence="1">
    <location>
        <begin position="934"/>
        <end position="950"/>
    </location>
</feature>
<feature type="disulfide bond" evidence="1">
    <location>
        <begin position="952"/>
        <end position="961"/>
    </location>
</feature>
<feature type="disulfide bond" evidence="1">
    <location>
        <begin position="968"/>
        <end position="979"/>
    </location>
</feature>
<feature type="disulfide bond" evidence="1">
    <location>
        <begin position="973"/>
        <end position="991"/>
    </location>
</feature>
<feature type="disulfide bond" evidence="1">
    <location>
        <begin position="993"/>
        <end position="1002"/>
    </location>
</feature>
<feature type="disulfide bond" evidence="1">
    <location>
        <begin position="1009"/>
        <end position="1020"/>
    </location>
</feature>
<feature type="disulfide bond" evidence="1">
    <location>
        <begin position="1014"/>
        <end position="1029"/>
    </location>
</feature>
<feature type="disulfide bond" evidence="1">
    <location>
        <begin position="1031"/>
        <end position="1040"/>
    </location>
</feature>
<feature type="disulfide bond" evidence="1">
    <location>
        <begin position="1047"/>
        <end position="1060"/>
    </location>
</feature>
<feature type="disulfide bond" evidence="1">
    <location>
        <begin position="1054"/>
        <end position="1069"/>
    </location>
</feature>
<feature type="disulfide bond" evidence="1">
    <location>
        <begin position="1071"/>
        <end position="1080"/>
    </location>
</feature>
<feature type="disulfide bond" evidence="1">
    <location>
        <begin position="1087"/>
        <end position="1098"/>
    </location>
</feature>
<feature type="disulfide bond" evidence="1">
    <location>
        <begin position="1092"/>
        <end position="1107"/>
    </location>
</feature>
<feature type="disulfide bond" evidence="1">
    <location>
        <begin position="1109"/>
        <end position="1118"/>
    </location>
</feature>
<feature type="disulfide bond" evidence="1">
    <location>
        <begin position="1131"/>
        <end position="1142"/>
    </location>
</feature>
<feature type="disulfide bond" evidence="1">
    <location>
        <begin position="1136"/>
        <end position="1151"/>
    </location>
</feature>
<feature type="disulfide bond" evidence="1">
    <location>
        <begin position="1153"/>
        <end position="1162"/>
    </location>
</feature>
<feature type="disulfide bond" evidence="1">
    <location>
        <begin position="1313"/>
        <end position="1339"/>
    </location>
</feature>
<feature type="disulfide bond" evidence="1">
    <location>
        <begin position="1342"/>
        <end position="1352"/>
    </location>
</feature>
<feature type="disulfide bond" evidence="1">
    <location>
        <begin position="1347"/>
        <end position="1362"/>
    </location>
</feature>
<feature type="disulfide bond" evidence="1">
    <location>
        <begin position="1364"/>
        <end position="1373"/>
    </location>
</feature>
<feature type="disulfide bond" evidence="1">
    <location>
        <begin position="1381"/>
        <end position="1391"/>
    </location>
</feature>
<feature type="disulfide bond" evidence="1">
    <location>
        <begin position="1386"/>
        <end position="1401"/>
    </location>
</feature>
<feature type="disulfide bond" evidence="1">
    <location>
        <begin position="1403"/>
        <end position="1412"/>
    </location>
</feature>
<feature type="disulfide bond" evidence="1">
    <location>
        <begin position="1422"/>
        <end position="1432"/>
    </location>
</feature>
<feature type="disulfide bond" evidence="1">
    <location>
        <begin position="1427"/>
        <end position="1442"/>
    </location>
</feature>
<feature type="disulfide bond" evidence="1">
    <location>
        <begin position="1444"/>
        <end position="1453"/>
    </location>
</feature>
<feature type="disulfide bond" evidence="1">
    <location>
        <begin position="1459"/>
        <end position="1498"/>
    </location>
</feature>
<feature type="disulfide bond" evidence="1">
    <location>
        <begin position="1477"/>
        <end position="1512"/>
    </location>
</feature>
<feature type="disulfide bond" evidence="1">
    <location>
        <begin position="1488"/>
        <end position="1528"/>
    </location>
</feature>
<feature type="disulfide bond" evidence="1">
    <location>
        <begin position="1492"/>
        <end position="1530"/>
    </location>
</feature>
<feature type="splice variant" id="VSP_009706" description="In isoform 2." evidence="7">
    <original>I</original>
    <variation>IRPLSFCSPCR</variation>
    <location>
        <position position="338"/>
    </location>
</feature>
<feature type="splice variant" id="VSP_009707" description="In isoform 2." evidence="7">
    <location>
        <begin position="790"/>
        <end position="813"/>
    </location>
</feature>
<feature type="splice variant" id="VSP_009708" description="In isoform 2." evidence="7">
    <location>
        <begin position="830"/>
        <end position="1534"/>
    </location>
</feature>
<feature type="sequence variant" id="VAR_049003" description="In dbSNP:rs2817673.">
    <original>P</original>
    <variation>L</variation>
    <location>
        <position position="824"/>
    </location>
</feature>
<feature type="sequence conflict" description="In Ref. 2; BAA32465." evidence="8" ref="2">
    <original>A</original>
    <variation>V</variation>
    <location>
        <position position="99"/>
    </location>
</feature>
<feature type="sequence conflict" description="In Ref. 1; BAA35184." evidence="8" ref="1">
    <original>Q</original>
    <variation>R</variation>
    <location>
        <position position="163"/>
    </location>
</feature>
<feature type="sequence conflict" description="In Ref. 8; AAK31796." evidence="8" ref="8">
    <original>Q</original>
    <variation>P</variation>
    <location>
        <position position="829"/>
    </location>
</feature>
<feature type="sequence conflict" description="In Ref. 1; BAA35184." evidence="8" ref="1">
    <original>D</original>
    <variation>N</variation>
    <location>
        <position position="966"/>
    </location>
</feature>
<sequence>MALTPGWGSSAGPVRPELWLLLWAAAWRLGASACPALCTCTGTTVDCHGTGLQAIPKNIPRNTERLELNGNNITRIHKNDFAGLKQLRVLQLMENQIGAVERGAFDDMKELERLRLNRNQLHMLPELLFQNNQALSRLDLSENAIQAIPRKAFRGATDLKNLQLDKNQISCIEEGAFRALRGLEVLTLNNNNITTIPVSSFNHMPKLRTFRLHSNHLFCDCHLAWLSQWLRQRPTIGLFTQCSGPASLRGLNVAEVQKSEFSCSGQGEAGRVPTCTLSSGSCPAMCTCSNGIVDCRGKGLTAIPANLPETMTEIRLELNGIKSIPPGAFSPYRKLRRIDLSNNQIAEIAPDAFQGLRSLNSLVLYGNKITDLPRGVFGGLYTLQLLLLNANKINCIRPDAFQDLQNLSLLSLYDNKIQSLAKGTFTSLRAIQTLHLAQNPFICDCNLKWLADFLRTNPIETSGARCASPRRLANKRIGQIKSKKFRCSAKEQYFIPGTEDYQLNSECNSDVVCPHKCRCEANVVECSSLKLTKIPERIPQSTAELRLNNNEISILEATGMFKKLTHLKKINLSNNKVSEIEDGAFEGAASVSELHLTANQLESIRSGMFRGLDGLRTLMLRNNRISCIHNDSFTGLRNVRLLSLYDNQITTVSPGAFDTLQSLSTLNLLANPFNCNCQLAWLGGWLRKRKIVTGNPRCQNPDFLRQIPLQDVAFPDFRCEEGQEEGGCLPRPQCPQECACLDTVVRCSNKHLRALPKGIPKNVTELYLDGNQFTLVPGQLSTFKYLQLVDLSNNKISSLSNSSFTNMSQLTTLILSYNALQCIPPLAFQGLRSLRLLSLHGNDISTLQEGIFADVTSLSHLAIGANPLYCDCHLRWLSSWVKTGYKEPGIARCAGPQDMEGKLLLTTPAKKFECQGPPTLAVQAKCDLCLSSPCQNQGTCHNDPLEVYRCACPSGYKGRDCEVSLDSCSSGPCENGGTCHAQEGEDAPFTCSCPTGFEGPTCGVNTDDCVDHACANGGVCVDGVGNYTCQCPLQYEGKACEQLVDLCSPDLNPCQHEAQCVGTPDGPRCECMPGYAGDNCSENQDDCRDHRCQNGAQCMDEVNSYSCLCAEGYSGQLCEIPPHLPAPKSPCEGTECQNGANCVDQGNRPVCQCLPGFGGPECEKLLSVNFVDRDTYLQFTDLQNWPRANITLQVSTAEDNGILLYNGDNDHIAVELYQGHVRVSYDPGSYPSSAIYSAETINDGQFHTVELVAFDQMVNLSIDGGSPMTMDNFGKHYTLNSEAPLYVGGMPVDVNSAAFRLWQILNGTGFHGCIRNLYINNELQDFTKTQMKPGVVPGCEPCRKLYCLHGICQPNATPGPMCHCEAGWVGLHCDQPADGPCHGHKCVHGQCVPLDALSYSCQCQDGYSGALCNQAGALAEPCRGLQCLHGHCQASGTKGAHCVCDPGFSGELCEQESECRGDPVRDFHQVQRGYAICQTTRPLSWVECRGSCPGQGCCQGLRLKRRKFTFECSDGTSFAEEVEKPTKCGCALCA</sequence>
<proteinExistence type="evidence at protein level"/>
<accession>O75093</accession>
<accession>Q5T0V1</accession>
<accession>Q8WWZ2</accession>
<accession>Q9UIL7</accession>
<gene>
    <name type="primary">SLIT1</name>
    <name type="synonym">KIAA0813</name>
    <name type="synonym">MEGF4</name>
    <name type="synonym">SLIL1</name>
</gene>
<name>SLIT1_HUMAN</name>